<gene>
    <name evidence="1" type="primary">rpoC</name>
    <name type="ordered locus">Mmar10_1801</name>
</gene>
<protein>
    <recommendedName>
        <fullName evidence="1">DNA-directed RNA polymerase subunit beta'</fullName>
        <shortName evidence="1">RNAP subunit beta'</shortName>
        <ecNumber evidence="1">2.7.7.6</ecNumber>
    </recommendedName>
    <alternativeName>
        <fullName evidence="1">RNA polymerase subunit beta'</fullName>
    </alternativeName>
    <alternativeName>
        <fullName evidence="1">Transcriptase subunit beta'</fullName>
    </alternativeName>
</protein>
<name>RPOC_MARMM</name>
<organism>
    <name type="scientific">Maricaulis maris (strain MCS10)</name>
    <name type="common">Caulobacter maris</name>
    <dbReference type="NCBI Taxonomy" id="394221"/>
    <lineage>
        <taxon>Bacteria</taxon>
        <taxon>Pseudomonadati</taxon>
        <taxon>Pseudomonadota</taxon>
        <taxon>Alphaproteobacteria</taxon>
        <taxon>Maricaulales</taxon>
        <taxon>Maricaulaceae</taxon>
        <taxon>Maricaulis</taxon>
    </lineage>
</organism>
<proteinExistence type="inferred from homology"/>
<feature type="chain" id="PRO_0000308851" description="DNA-directed RNA polymerase subunit beta'">
    <location>
        <begin position="1"/>
        <end position="1405"/>
    </location>
</feature>
<feature type="binding site" evidence="1">
    <location>
        <position position="71"/>
    </location>
    <ligand>
        <name>Zn(2+)</name>
        <dbReference type="ChEBI" id="CHEBI:29105"/>
        <label>1</label>
    </ligand>
</feature>
<feature type="binding site" evidence="1">
    <location>
        <position position="73"/>
    </location>
    <ligand>
        <name>Zn(2+)</name>
        <dbReference type="ChEBI" id="CHEBI:29105"/>
        <label>1</label>
    </ligand>
</feature>
<feature type="binding site" evidence="1">
    <location>
        <position position="86"/>
    </location>
    <ligand>
        <name>Zn(2+)</name>
        <dbReference type="ChEBI" id="CHEBI:29105"/>
        <label>1</label>
    </ligand>
</feature>
<feature type="binding site" evidence="1">
    <location>
        <position position="89"/>
    </location>
    <ligand>
        <name>Zn(2+)</name>
        <dbReference type="ChEBI" id="CHEBI:29105"/>
        <label>1</label>
    </ligand>
</feature>
<feature type="binding site" evidence="1">
    <location>
        <position position="462"/>
    </location>
    <ligand>
        <name>Mg(2+)</name>
        <dbReference type="ChEBI" id="CHEBI:18420"/>
    </ligand>
</feature>
<feature type="binding site" evidence="1">
    <location>
        <position position="464"/>
    </location>
    <ligand>
        <name>Mg(2+)</name>
        <dbReference type="ChEBI" id="CHEBI:18420"/>
    </ligand>
</feature>
<feature type="binding site" evidence="1">
    <location>
        <position position="466"/>
    </location>
    <ligand>
        <name>Mg(2+)</name>
        <dbReference type="ChEBI" id="CHEBI:18420"/>
    </ligand>
</feature>
<feature type="binding site" evidence="1">
    <location>
        <position position="810"/>
    </location>
    <ligand>
        <name>Zn(2+)</name>
        <dbReference type="ChEBI" id="CHEBI:29105"/>
        <label>2</label>
    </ligand>
</feature>
<feature type="binding site" evidence="1">
    <location>
        <position position="884"/>
    </location>
    <ligand>
        <name>Zn(2+)</name>
        <dbReference type="ChEBI" id="CHEBI:29105"/>
        <label>2</label>
    </ligand>
</feature>
<feature type="binding site" evidence="1">
    <location>
        <position position="891"/>
    </location>
    <ligand>
        <name>Zn(2+)</name>
        <dbReference type="ChEBI" id="CHEBI:29105"/>
        <label>2</label>
    </ligand>
</feature>
<feature type="binding site" evidence="1">
    <location>
        <position position="894"/>
    </location>
    <ligand>
        <name>Zn(2+)</name>
        <dbReference type="ChEBI" id="CHEBI:29105"/>
        <label>2</label>
    </ligand>
</feature>
<sequence length="1405" mass="154405">MNHDVMNIFNPAAEGPSFDRIRIALASPEKIHSWSFGEVKKPETINYRTFKPERDGLFCARIFGPVKDYECLCGKYKRIKYKGIVCEKCGVEVTLARVRRERMGHIELAAPVAHIWFLKSLPSRIAMILDMALKDVERVLYFENYVVIEPGLTPLQPFQLLSEEEYMEAQDEYGEDAFTAGIGAEAVREILINMDLEAECAKVREDMKETGSELKLKKYAKRLKLMENFLTSGNRPEWMIMTVIPVIPPELRPLVPLDGGRFATSDLNDLYRRVINRNNRLKRLIELRAPDIIIRNEKRMLQESVDALFDNGRRGRVITGANKRPLKSLSDMLKGKQGRFRQNLLGKRVDYSGRSVIVVGPDLKLHECGLPKKMALELFKPFIYARLDAKGLSGTVKQSKKLVEKERPEVWDVLDEVIREHPVMLNRAPTLHRLGIQAFEPKLIEGKAIQLHPLVCAAFNADFDGDQMAVHVPLSLEAQLEARTLMMSTNNILSPANGKPIIVPSQDIVLGLYYLSIEKDNEPGEGMAFGSRAELEAALESDVITLHTKIKARWEGIDVDGNKITKVIETTPGRKMLVDLLPKHAKMQPEMIGELLTKKAIGALIDQVYRHCGQKATVIFCDQIMGLGFKEAAKAGISFGKDDMLIPDAKADLVGATRDMVSDYEQQYVDGLITKGEKYNKVVDAWAKCTDNVADAMMDEISKTSVGEDGRTSEVNSVYMMAHSGARGSKNQMKQLAGMRGLMAKPSGEIIETPIISNFKEGLTVLEYFNSTHGARKGLADTALKTANSGYLTRRLVDVAQDCIITEEDCGTSEGFEIQAVVDGGDVVVSLEQRILGRTLAAEVKDPASGEVICPADTYVDEDLAMAIEMAGVQSVIARSPLTCETRVGVCATCYGRDLARGTRVNIGEAVGVIAAQSIGEPGTQLTMRTFHIGGTAQVSEQSFIEAGSEGKVTFKNPSTVTNSDGDLIALSRNMQLVIVDTEGKERESYKLGYGTKLKVKEGDKTTRGQRLGEWDPYTAPVVSEVGGKVKFVDIAEGVSVKEETDEATGIASKVVIDWRGSAKANALQPTIVVQDENGEPIKLSSGSTASYMLAVGAILSVADGDTVRPGDIVARIPTEGAKTRDITGGLPRVAELFEARRPKDHAVIAEITGRVEFGRDYKNKRRIAIVPEGDEAEKVEYLVPKGKHLTCQEGDVIQKGEYLLDGHPAPHDILAILGVPALANYLIDEIQEVYRLQGVPINDKHIETIVRQMLQKIEVKDPGESTYLAAEQVDKIEFIETNERLEAEGKRMATGDPVLLGITKASLQTRSFISAASFQETTRVLTEAAVQGKEDTLEGLKENVIVGRLIPAGTGAIMRQYQVIADDLDADMLAEREAAVEAEGLPTEIAEAAAEEMAAEEGAS</sequence>
<reference key="1">
    <citation type="submission" date="2006-08" db="EMBL/GenBank/DDBJ databases">
        <title>Complete sequence of Maricaulis maris MCS10.</title>
        <authorList>
            <consortium name="US DOE Joint Genome Institute"/>
            <person name="Copeland A."/>
            <person name="Lucas S."/>
            <person name="Lapidus A."/>
            <person name="Barry K."/>
            <person name="Detter J.C."/>
            <person name="Glavina del Rio T."/>
            <person name="Hammon N."/>
            <person name="Israni S."/>
            <person name="Dalin E."/>
            <person name="Tice H."/>
            <person name="Pitluck S."/>
            <person name="Saunders E."/>
            <person name="Brettin T."/>
            <person name="Bruce D."/>
            <person name="Han C."/>
            <person name="Tapia R."/>
            <person name="Gilna P."/>
            <person name="Schmutz J."/>
            <person name="Larimer F."/>
            <person name="Land M."/>
            <person name="Hauser L."/>
            <person name="Kyrpides N."/>
            <person name="Mikhailova N."/>
            <person name="Viollier P."/>
            <person name="Stephens C."/>
            <person name="Richardson P."/>
        </authorList>
    </citation>
    <scope>NUCLEOTIDE SEQUENCE [LARGE SCALE GENOMIC DNA]</scope>
    <source>
        <strain>MCS10</strain>
    </source>
</reference>
<evidence type="ECO:0000255" key="1">
    <source>
        <dbReference type="HAMAP-Rule" id="MF_01322"/>
    </source>
</evidence>
<accession>Q0ANP4</accession>
<keyword id="KW-0240">DNA-directed RNA polymerase</keyword>
<keyword id="KW-0460">Magnesium</keyword>
<keyword id="KW-0479">Metal-binding</keyword>
<keyword id="KW-0548">Nucleotidyltransferase</keyword>
<keyword id="KW-1185">Reference proteome</keyword>
<keyword id="KW-0804">Transcription</keyword>
<keyword id="KW-0808">Transferase</keyword>
<keyword id="KW-0862">Zinc</keyword>
<comment type="function">
    <text evidence="1">DNA-dependent RNA polymerase catalyzes the transcription of DNA into RNA using the four ribonucleoside triphosphates as substrates.</text>
</comment>
<comment type="catalytic activity">
    <reaction evidence="1">
        <text>RNA(n) + a ribonucleoside 5'-triphosphate = RNA(n+1) + diphosphate</text>
        <dbReference type="Rhea" id="RHEA:21248"/>
        <dbReference type="Rhea" id="RHEA-COMP:14527"/>
        <dbReference type="Rhea" id="RHEA-COMP:17342"/>
        <dbReference type="ChEBI" id="CHEBI:33019"/>
        <dbReference type="ChEBI" id="CHEBI:61557"/>
        <dbReference type="ChEBI" id="CHEBI:140395"/>
        <dbReference type="EC" id="2.7.7.6"/>
    </reaction>
</comment>
<comment type="cofactor">
    <cofactor evidence="1">
        <name>Mg(2+)</name>
        <dbReference type="ChEBI" id="CHEBI:18420"/>
    </cofactor>
    <text evidence="1">Binds 1 Mg(2+) ion per subunit.</text>
</comment>
<comment type="cofactor">
    <cofactor evidence="1">
        <name>Zn(2+)</name>
        <dbReference type="ChEBI" id="CHEBI:29105"/>
    </cofactor>
    <text evidence="1">Binds 2 Zn(2+) ions per subunit.</text>
</comment>
<comment type="subunit">
    <text evidence="1">The RNAP catalytic core consists of 2 alpha, 1 beta, 1 beta' and 1 omega subunit. When a sigma factor is associated with the core the holoenzyme is formed, which can initiate transcription.</text>
</comment>
<comment type="similarity">
    <text evidence="1">Belongs to the RNA polymerase beta' chain family.</text>
</comment>
<dbReference type="EC" id="2.7.7.6" evidence="1"/>
<dbReference type="EMBL" id="CP000449">
    <property type="protein sequence ID" value="ABI66093.1"/>
    <property type="molecule type" value="Genomic_DNA"/>
</dbReference>
<dbReference type="RefSeq" id="WP_011643739.1">
    <property type="nucleotide sequence ID" value="NC_008347.1"/>
</dbReference>
<dbReference type="SMR" id="Q0ANP4"/>
<dbReference type="STRING" id="394221.Mmar10_1801"/>
<dbReference type="KEGG" id="mmr:Mmar10_1801"/>
<dbReference type="eggNOG" id="COG0086">
    <property type="taxonomic scope" value="Bacteria"/>
</dbReference>
<dbReference type="HOGENOM" id="CLU_000524_3_1_5"/>
<dbReference type="OrthoDB" id="9815296at2"/>
<dbReference type="Proteomes" id="UP000001964">
    <property type="component" value="Chromosome"/>
</dbReference>
<dbReference type="GO" id="GO:0000428">
    <property type="term" value="C:DNA-directed RNA polymerase complex"/>
    <property type="evidence" value="ECO:0007669"/>
    <property type="project" value="UniProtKB-KW"/>
</dbReference>
<dbReference type="GO" id="GO:0003677">
    <property type="term" value="F:DNA binding"/>
    <property type="evidence" value="ECO:0007669"/>
    <property type="project" value="UniProtKB-UniRule"/>
</dbReference>
<dbReference type="GO" id="GO:0003899">
    <property type="term" value="F:DNA-directed RNA polymerase activity"/>
    <property type="evidence" value="ECO:0007669"/>
    <property type="project" value="UniProtKB-UniRule"/>
</dbReference>
<dbReference type="GO" id="GO:0000287">
    <property type="term" value="F:magnesium ion binding"/>
    <property type="evidence" value="ECO:0007669"/>
    <property type="project" value="UniProtKB-UniRule"/>
</dbReference>
<dbReference type="GO" id="GO:0008270">
    <property type="term" value="F:zinc ion binding"/>
    <property type="evidence" value="ECO:0007669"/>
    <property type="project" value="UniProtKB-UniRule"/>
</dbReference>
<dbReference type="GO" id="GO:0006351">
    <property type="term" value="P:DNA-templated transcription"/>
    <property type="evidence" value="ECO:0007669"/>
    <property type="project" value="UniProtKB-UniRule"/>
</dbReference>
<dbReference type="CDD" id="cd02655">
    <property type="entry name" value="RNAP_beta'_C"/>
    <property type="match status" value="1"/>
</dbReference>
<dbReference type="CDD" id="cd01609">
    <property type="entry name" value="RNAP_beta'_N"/>
    <property type="match status" value="1"/>
</dbReference>
<dbReference type="FunFam" id="4.10.860.120:FF:000001">
    <property type="entry name" value="DNA-directed RNA polymerase subunit beta"/>
    <property type="match status" value="1"/>
</dbReference>
<dbReference type="Gene3D" id="1.10.132.30">
    <property type="match status" value="1"/>
</dbReference>
<dbReference type="Gene3D" id="1.10.150.390">
    <property type="match status" value="1"/>
</dbReference>
<dbReference type="Gene3D" id="1.10.1790.20">
    <property type="match status" value="1"/>
</dbReference>
<dbReference type="Gene3D" id="1.10.40.90">
    <property type="match status" value="1"/>
</dbReference>
<dbReference type="Gene3D" id="2.40.40.20">
    <property type="match status" value="1"/>
</dbReference>
<dbReference type="Gene3D" id="2.40.50.100">
    <property type="match status" value="3"/>
</dbReference>
<dbReference type="Gene3D" id="4.10.860.120">
    <property type="entry name" value="RNA polymerase II, clamp domain"/>
    <property type="match status" value="1"/>
</dbReference>
<dbReference type="Gene3D" id="1.10.274.100">
    <property type="entry name" value="RNA polymerase Rpb1, domain 3"/>
    <property type="match status" value="2"/>
</dbReference>
<dbReference type="HAMAP" id="MF_01322">
    <property type="entry name" value="RNApol_bact_RpoC"/>
    <property type="match status" value="1"/>
</dbReference>
<dbReference type="InterPro" id="IPR045867">
    <property type="entry name" value="DNA-dir_RpoC_beta_prime"/>
</dbReference>
<dbReference type="InterPro" id="IPR012754">
    <property type="entry name" value="DNA-dir_RpoC_beta_prime_bact"/>
</dbReference>
<dbReference type="InterPro" id="IPR000722">
    <property type="entry name" value="RNA_pol_asu"/>
</dbReference>
<dbReference type="InterPro" id="IPR006592">
    <property type="entry name" value="RNA_pol_N"/>
</dbReference>
<dbReference type="InterPro" id="IPR007080">
    <property type="entry name" value="RNA_pol_Rpb1_1"/>
</dbReference>
<dbReference type="InterPro" id="IPR007066">
    <property type="entry name" value="RNA_pol_Rpb1_3"/>
</dbReference>
<dbReference type="InterPro" id="IPR042102">
    <property type="entry name" value="RNA_pol_Rpb1_3_sf"/>
</dbReference>
<dbReference type="InterPro" id="IPR007083">
    <property type="entry name" value="RNA_pol_Rpb1_4"/>
</dbReference>
<dbReference type="InterPro" id="IPR007081">
    <property type="entry name" value="RNA_pol_Rpb1_5"/>
</dbReference>
<dbReference type="InterPro" id="IPR044893">
    <property type="entry name" value="RNA_pol_Rpb1_clamp_domain"/>
</dbReference>
<dbReference type="InterPro" id="IPR038120">
    <property type="entry name" value="Rpb1_funnel_sf"/>
</dbReference>
<dbReference type="NCBIfam" id="TIGR02386">
    <property type="entry name" value="rpoC_TIGR"/>
    <property type="match status" value="1"/>
</dbReference>
<dbReference type="PANTHER" id="PTHR19376">
    <property type="entry name" value="DNA-DIRECTED RNA POLYMERASE"/>
    <property type="match status" value="1"/>
</dbReference>
<dbReference type="PANTHER" id="PTHR19376:SF54">
    <property type="entry name" value="DNA-DIRECTED RNA POLYMERASE SUBUNIT BETA"/>
    <property type="match status" value="1"/>
</dbReference>
<dbReference type="Pfam" id="PF04997">
    <property type="entry name" value="RNA_pol_Rpb1_1"/>
    <property type="match status" value="1"/>
</dbReference>
<dbReference type="Pfam" id="PF00623">
    <property type="entry name" value="RNA_pol_Rpb1_2"/>
    <property type="match status" value="1"/>
</dbReference>
<dbReference type="Pfam" id="PF04983">
    <property type="entry name" value="RNA_pol_Rpb1_3"/>
    <property type="match status" value="1"/>
</dbReference>
<dbReference type="Pfam" id="PF05000">
    <property type="entry name" value="RNA_pol_Rpb1_4"/>
    <property type="match status" value="1"/>
</dbReference>
<dbReference type="Pfam" id="PF04998">
    <property type="entry name" value="RNA_pol_Rpb1_5"/>
    <property type="match status" value="1"/>
</dbReference>
<dbReference type="SMART" id="SM00663">
    <property type="entry name" value="RPOLA_N"/>
    <property type="match status" value="1"/>
</dbReference>
<dbReference type="SUPFAM" id="SSF64484">
    <property type="entry name" value="beta and beta-prime subunits of DNA dependent RNA-polymerase"/>
    <property type="match status" value="1"/>
</dbReference>